<proteinExistence type="inferred from homology"/>
<protein>
    <recommendedName>
        <fullName evidence="1">ATP-dependent protease subunit HslV</fullName>
        <ecNumber evidence="1">3.4.25.2</ecNumber>
    </recommendedName>
</protein>
<dbReference type="EC" id="3.4.25.2" evidence="1"/>
<dbReference type="EMBL" id="CP000350">
    <property type="protein sequence ID" value="ABJ75868.1"/>
    <property type="molecule type" value="Genomic_DNA"/>
</dbReference>
<dbReference type="RefSeq" id="WP_011670162.1">
    <property type="nucleotide sequence ID" value="NC_008510.1"/>
</dbReference>
<dbReference type="SMR" id="Q04TA2"/>
<dbReference type="MEROPS" id="T01.006"/>
<dbReference type="KEGG" id="lbj:LBJ_1283"/>
<dbReference type="HOGENOM" id="CLU_093872_1_0_12"/>
<dbReference type="Proteomes" id="UP000000656">
    <property type="component" value="Chromosome 1"/>
</dbReference>
<dbReference type="GO" id="GO:0009376">
    <property type="term" value="C:HslUV protease complex"/>
    <property type="evidence" value="ECO:0007669"/>
    <property type="project" value="UniProtKB-UniRule"/>
</dbReference>
<dbReference type="GO" id="GO:0005839">
    <property type="term" value="C:proteasome core complex"/>
    <property type="evidence" value="ECO:0007669"/>
    <property type="project" value="InterPro"/>
</dbReference>
<dbReference type="GO" id="GO:0046872">
    <property type="term" value="F:metal ion binding"/>
    <property type="evidence" value="ECO:0007669"/>
    <property type="project" value="UniProtKB-KW"/>
</dbReference>
<dbReference type="GO" id="GO:0004298">
    <property type="term" value="F:threonine-type endopeptidase activity"/>
    <property type="evidence" value="ECO:0007669"/>
    <property type="project" value="UniProtKB-KW"/>
</dbReference>
<dbReference type="GO" id="GO:0051603">
    <property type="term" value="P:proteolysis involved in protein catabolic process"/>
    <property type="evidence" value="ECO:0007669"/>
    <property type="project" value="InterPro"/>
</dbReference>
<dbReference type="CDD" id="cd01913">
    <property type="entry name" value="protease_HslV"/>
    <property type="match status" value="1"/>
</dbReference>
<dbReference type="FunFam" id="3.60.20.10:FF:000002">
    <property type="entry name" value="ATP-dependent protease subunit HslV"/>
    <property type="match status" value="1"/>
</dbReference>
<dbReference type="Gene3D" id="3.60.20.10">
    <property type="entry name" value="Glutamine Phosphoribosylpyrophosphate, subunit 1, domain 1"/>
    <property type="match status" value="1"/>
</dbReference>
<dbReference type="HAMAP" id="MF_00248">
    <property type="entry name" value="HslV"/>
    <property type="match status" value="1"/>
</dbReference>
<dbReference type="InterPro" id="IPR022281">
    <property type="entry name" value="ATP-dep_Prtase_HsIV_su"/>
</dbReference>
<dbReference type="InterPro" id="IPR029055">
    <property type="entry name" value="Ntn_hydrolases_N"/>
</dbReference>
<dbReference type="InterPro" id="IPR001353">
    <property type="entry name" value="Proteasome_sua/b"/>
</dbReference>
<dbReference type="InterPro" id="IPR023333">
    <property type="entry name" value="Proteasome_suB-type"/>
</dbReference>
<dbReference type="NCBIfam" id="TIGR03692">
    <property type="entry name" value="ATP_dep_HslV"/>
    <property type="match status" value="1"/>
</dbReference>
<dbReference type="NCBIfam" id="NF003964">
    <property type="entry name" value="PRK05456.1"/>
    <property type="match status" value="1"/>
</dbReference>
<dbReference type="PANTHER" id="PTHR32194:SF0">
    <property type="entry name" value="ATP-DEPENDENT PROTEASE SUBUNIT HSLV"/>
    <property type="match status" value="1"/>
</dbReference>
<dbReference type="PANTHER" id="PTHR32194">
    <property type="entry name" value="METALLOPROTEASE TLDD"/>
    <property type="match status" value="1"/>
</dbReference>
<dbReference type="Pfam" id="PF00227">
    <property type="entry name" value="Proteasome"/>
    <property type="match status" value="1"/>
</dbReference>
<dbReference type="PIRSF" id="PIRSF039093">
    <property type="entry name" value="HslV"/>
    <property type="match status" value="1"/>
</dbReference>
<dbReference type="SUPFAM" id="SSF56235">
    <property type="entry name" value="N-terminal nucleophile aminohydrolases (Ntn hydrolases)"/>
    <property type="match status" value="1"/>
</dbReference>
<dbReference type="PROSITE" id="PS51476">
    <property type="entry name" value="PROTEASOME_BETA_2"/>
    <property type="match status" value="1"/>
</dbReference>
<gene>
    <name evidence="1" type="primary">hslV</name>
    <name type="ordered locus">LBJ_1283</name>
</gene>
<name>HSLV_LEPBJ</name>
<sequence length="180" mass="19477">MPENKIRSTTILCVRKSGKVAIGGDGQVSMGNTVMKNTAKKIRRLYDGKILSGFAGSAADAFTLFELFEKKVQEFGGSLSRSAVELAREWRTDRMLRKLEALLIVADKEESFLISGTGDVISPDEGVIAIGSGGSYALAAAKALYDHTDLSAREIVESSMKIAANICIYTNDHITLEEIL</sequence>
<evidence type="ECO:0000255" key="1">
    <source>
        <dbReference type="HAMAP-Rule" id="MF_00248"/>
    </source>
</evidence>
<organism>
    <name type="scientific">Leptospira borgpetersenii serovar Hardjo-bovis (strain JB197)</name>
    <dbReference type="NCBI Taxonomy" id="355277"/>
    <lineage>
        <taxon>Bacteria</taxon>
        <taxon>Pseudomonadati</taxon>
        <taxon>Spirochaetota</taxon>
        <taxon>Spirochaetia</taxon>
        <taxon>Leptospirales</taxon>
        <taxon>Leptospiraceae</taxon>
        <taxon>Leptospira</taxon>
    </lineage>
</organism>
<comment type="function">
    <text evidence="1">Protease subunit of a proteasome-like degradation complex believed to be a general protein degrading machinery.</text>
</comment>
<comment type="catalytic activity">
    <reaction evidence="1">
        <text>ATP-dependent cleavage of peptide bonds with broad specificity.</text>
        <dbReference type="EC" id="3.4.25.2"/>
    </reaction>
</comment>
<comment type="activity regulation">
    <text evidence="1">Allosterically activated by HslU binding.</text>
</comment>
<comment type="subunit">
    <text evidence="1">A double ring-shaped homohexamer of HslV is capped on each side by a ring-shaped HslU homohexamer. The assembly of the HslU/HslV complex is dependent on binding of ATP.</text>
</comment>
<comment type="subcellular location">
    <subcellularLocation>
        <location evidence="1">Cytoplasm</location>
    </subcellularLocation>
</comment>
<comment type="similarity">
    <text evidence="1">Belongs to the peptidase T1B family. HslV subfamily.</text>
</comment>
<feature type="chain" id="PRO_1000012631" description="ATP-dependent protease subunit HslV">
    <location>
        <begin position="1"/>
        <end position="180"/>
    </location>
</feature>
<feature type="active site" evidence="1">
    <location>
        <position position="9"/>
    </location>
</feature>
<feature type="binding site" evidence="1">
    <location>
        <position position="164"/>
    </location>
    <ligand>
        <name>Na(+)</name>
        <dbReference type="ChEBI" id="CHEBI:29101"/>
    </ligand>
</feature>
<feature type="binding site" evidence="1">
    <location>
        <position position="167"/>
    </location>
    <ligand>
        <name>Na(+)</name>
        <dbReference type="ChEBI" id="CHEBI:29101"/>
    </ligand>
</feature>
<feature type="binding site" evidence="1">
    <location>
        <position position="170"/>
    </location>
    <ligand>
        <name>Na(+)</name>
        <dbReference type="ChEBI" id="CHEBI:29101"/>
    </ligand>
</feature>
<accession>Q04TA2</accession>
<keyword id="KW-0021">Allosteric enzyme</keyword>
<keyword id="KW-0963">Cytoplasm</keyword>
<keyword id="KW-0378">Hydrolase</keyword>
<keyword id="KW-0479">Metal-binding</keyword>
<keyword id="KW-0645">Protease</keyword>
<keyword id="KW-0915">Sodium</keyword>
<keyword id="KW-0888">Threonine protease</keyword>
<reference key="1">
    <citation type="journal article" date="2006" name="Proc. Natl. Acad. Sci. U.S.A.">
        <title>Genome reduction in Leptospira borgpetersenii reflects limited transmission potential.</title>
        <authorList>
            <person name="Bulach D.M."/>
            <person name="Zuerner R.L."/>
            <person name="Wilson P."/>
            <person name="Seemann T."/>
            <person name="McGrath A."/>
            <person name="Cullen P.A."/>
            <person name="Davis J."/>
            <person name="Johnson M."/>
            <person name="Kuczek E."/>
            <person name="Alt D.P."/>
            <person name="Peterson-Burch B."/>
            <person name="Coppel R.L."/>
            <person name="Rood J.I."/>
            <person name="Davies J.K."/>
            <person name="Adler B."/>
        </authorList>
    </citation>
    <scope>NUCLEOTIDE SEQUENCE [LARGE SCALE GENOMIC DNA]</scope>
    <source>
        <strain>JB197</strain>
    </source>
</reference>